<protein>
    <recommendedName>
        <fullName evidence="2">Ornithine carbamoyltransferase, catabolic</fullName>
        <shortName evidence="2">OTCase</shortName>
        <ecNumber evidence="2">2.1.3.3</ecNumber>
    </recommendedName>
</protein>
<organism>
    <name type="scientific">Borreliella burgdorferi (strain ATCC 35210 / DSM 4680 / CIP 102532 / B31)</name>
    <name type="common">Borrelia burgdorferi</name>
    <dbReference type="NCBI Taxonomy" id="224326"/>
    <lineage>
        <taxon>Bacteria</taxon>
        <taxon>Pseudomonadati</taxon>
        <taxon>Spirochaetota</taxon>
        <taxon>Spirochaetia</taxon>
        <taxon>Spirochaetales</taxon>
        <taxon>Borreliaceae</taxon>
        <taxon>Borreliella</taxon>
    </lineage>
</organism>
<dbReference type="EC" id="2.1.3.3" evidence="2"/>
<dbReference type="EMBL" id="AE000783">
    <property type="protein sequence ID" value="AAC67190.2"/>
    <property type="molecule type" value="Genomic_DNA"/>
</dbReference>
<dbReference type="PIR" id="A70205">
    <property type="entry name" value="A70205"/>
</dbReference>
<dbReference type="RefSeq" id="NP_212976.2">
    <property type="nucleotide sequence ID" value="NC_001318.1"/>
</dbReference>
<dbReference type="SMR" id="O51782"/>
<dbReference type="STRING" id="224326.BB_0842"/>
<dbReference type="PaxDb" id="224326-BB_0842"/>
<dbReference type="EnsemblBacteria" id="AAC67190">
    <property type="protein sequence ID" value="AAC67190"/>
    <property type="gene ID" value="BB_0842"/>
</dbReference>
<dbReference type="KEGG" id="bbu:BB_0842"/>
<dbReference type="PATRIC" id="fig|224326.49.peg.1235"/>
<dbReference type="HOGENOM" id="CLU_043846_3_1_12"/>
<dbReference type="OrthoDB" id="9802587at2"/>
<dbReference type="UniPathway" id="UPA00254">
    <property type="reaction ID" value="UER00365"/>
</dbReference>
<dbReference type="Proteomes" id="UP000001807">
    <property type="component" value="Chromosome"/>
</dbReference>
<dbReference type="GO" id="GO:0005737">
    <property type="term" value="C:cytoplasm"/>
    <property type="evidence" value="ECO:0007669"/>
    <property type="project" value="UniProtKB-SubCell"/>
</dbReference>
<dbReference type="GO" id="GO:0016597">
    <property type="term" value="F:amino acid binding"/>
    <property type="evidence" value="ECO:0007669"/>
    <property type="project" value="InterPro"/>
</dbReference>
<dbReference type="GO" id="GO:0004585">
    <property type="term" value="F:ornithine carbamoyltransferase activity"/>
    <property type="evidence" value="ECO:0007669"/>
    <property type="project" value="UniProtKB-UniRule"/>
</dbReference>
<dbReference type="GO" id="GO:0042450">
    <property type="term" value="P:arginine biosynthetic process via ornithine"/>
    <property type="evidence" value="ECO:0007669"/>
    <property type="project" value="TreeGrafter"/>
</dbReference>
<dbReference type="GO" id="GO:0019547">
    <property type="term" value="P:arginine catabolic process to ornithine"/>
    <property type="evidence" value="ECO:0007669"/>
    <property type="project" value="UniProtKB-UniRule"/>
</dbReference>
<dbReference type="GO" id="GO:0019240">
    <property type="term" value="P:citrulline biosynthetic process"/>
    <property type="evidence" value="ECO:0007669"/>
    <property type="project" value="TreeGrafter"/>
</dbReference>
<dbReference type="FunFam" id="3.40.50.1370:FF:000008">
    <property type="entry name" value="Ornithine carbamoyltransferase"/>
    <property type="match status" value="1"/>
</dbReference>
<dbReference type="Gene3D" id="3.40.50.1370">
    <property type="entry name" value="Aspartate/ornithine carbamoyltransferase"/>
    <property type="match status" value="2"/>
</dbReference>
<dbReference type="HAMAP" id="MF_01109">
    <property type="entry name" value="OTCase"/>
    <property type="match status" value="1"/>
</dbReference>
<dbReference type="InterPro" id="IPR006132">
    <property type="entry name" value="Asp/Orn_carbamoyltranf_P-bd"/>
</dbReference>
<dbReference type="InterPro" id="IPR006130">
    <property type="entry name" value="Asp/Orn_carbamoylTrfase"/>
</dbReference>
<dbReference type="InterPro" id="IPR036901">
    <property type="entry name" value="Asp/Orn_carbamoylTrfase_sf"/>
</dbReference>
<dbReference type="InterPro" id="IPR006131">
    <property type="entry name" value="Asp_carbamoyltransf_Asp/Orn-bd"/>
</dbReference>
<dbReference type="InterPro" id="IPR002292">
    <property type="entry name" value="Orn/put_carbamltrans"/>
</dbReference>
<dbReference type="InterPro" id="IPR024904">
    <property type="entry name" value="OTCase_ArgI"/>
</dbReference>
<dbReference type="NCBIfam" id="TIGR00658">
    <property type="entry name" value="orni_carb_tr"/>
    <property type="match status" value="1"/>
</dbReference>
<dbReference type="NCBIfam" id="NF001986">
    <property type="entry name" value="PRK00779.1"/>
    <property type="match status" value="1"/>
</dbReference>
<dbReference type="NCBIfam" id="NF003286">
    <property type="entry name" value="PRK04284.1"/>
    <property type="match status" value="1"/>
</dbReference>
<dbReference type="PANTHER" id="PTHR45753:SF1">
    <property type="entry name" value="ORNITHINE CARBAMOYLTRANSFERASE, CATABOLIC"/>
    <property type="match status" value="1"/>
</dbReference>
<dbReference type="PANTHER" id="PTHR45753">
    <property type="entry name" value="ORNITHINE CARBAMOYLTRANSFERASE, MITOCHONDRIAL"/>
    <property type="match status" value="1"/>
</dbReference>
<dbReference type="Pfam" id="PF00185">
    <property type="entry name" value="OTCace"/>
    <property type="match status" value="1"/>
</dbReference>
<dbReference type="Pfam" id="PF02729">
    <property type="entry name" value="OTCace_N"/>
    <property type="match status" value="1"/>
</dbReference>
<dbReference type="PRINTS" id="PR00100">
    <property type="entry name" value="AOTCASE"/>
</dbReference>
<dbReference type="PRINTS" id="PR00102">
    <property type="entry name" value="OTCASE"/>
</dbReference>
<dbReference type="SUPFAM" id="SSF53671">
    <property type="entry name" value="Aspartate/ornithine carbamoyltransferase"/>
    <property type="match status" value="1"/>
</dbReference>
<dbReference type="PROSITE" id="PS00097">
    <property type="entry name" value="CARBAMOYLTRANSFERASE"/>
    <property type="match status" value="1"/>
</dbReference>
<gene>
    <name evidence="2" type="primary">arcB</name>
    <name type="ordered locus">BB_0842</name>
</gene>
<reference key="1">
    <citation type="journal article" date="1997" name="Nature">
        <title>Genomic sequence of a Lyme disease spirochaete, Borrelia burgdorferi.</title>
        <authorList>
            <person name="Fraser C.M."/>
            <person name="Casjens S."/>
            <person name="Huang W.M."/>
            <person name="Sutton G.G."/>
            <person name="Clayton R.A."/>
            <person name="Lathigra R."/>
            <person name="White O."/>
            <person name="Ketchum K.A."/>
            <person name="Dodson R.J."/>
            <person name="Hickey E.K."/>
            <person name="Gwinn M.L."/>
            <person name="Dougherty B.A."/>
            <person name="Tomb J.-F."/>
            <person name="Fleischmann R.D."/>
            <person name="Richardson D.L."/>
            <person name="Peterson J.D."/>
            <person name="Kerlavage A.R."/>
            <person name="Quackenbush J."/>
            <person name="Salzberg S.L."/>
            <person name="Hanson M."/>
            <person name="van Vugt R."/>
            <person name="Palmer N."/>
            <person name="Adams M.D."/>
            <person name="Gocayne J.D."/>
            <person name="Weidman J.F."/>
            <person name="Utterback T.R."/>
            <person name="Watthey L."/>
            <person name="McDonald L.A."/>
            <person name="Artiach P."/>
            <person name="Bowman C."/>
            <person name="Garland S.A."/>
            <person name="Fujii C."/>
            <person name="Cotton M.D."/>
            <person name="Horst K."/>
            <person name="Roberts K.M."/>
            <person name="Hatch B."/>
            <person name="Smith H.O."/>
            <person name="Venter J.C."/>
        </authorList>
    </citation>
    <scope>NUCLEOTIDE SEQUENCE [LARGE SCALE GENOMIC DNA]</scope>
    <source>
        <strain>ATCC 35210 / DSM 4680 / CIP 102532 / B31</strain>
    </source>
</reference>
<keyword id="KW-0056">Arginine metabolism</keyword>
<keyword id="KW-0963">Cytoplasm</keyword>
<keyword id="KW-1185">Reference proteome</keyword>
<keyword id="KW-0808">Transferase</keyword>
<feature type="chain" id="PRO_0000112890" description="Ornithine carbamoyltransferase, catabolic">
    <location>
        <begin position="1"/>
        <end position="327"/>
    </location>
</feature>
<feature type="binding site" evidence="2">
    <location>
        <begin position="56"/>
        <end position="59"/>
    </location>
    <ligand>
        <name>carbamoyl phosphate</name>
        <dbReference type="ChEBI" id="CHEBI:58228"/>
    </ligand>
</feature>
<feature type="binding site" evidence="2">
    <location>
        <position position="83"/>
    </location>
    <ligand>
        <name>carbamoyl phosphate</name>
        <dbReference type="ChEBI" id="CHEBI:58228"/>
    </ligand>
</feature>
<feature type="binding site" evidence="2">
    <location>
        <position position="107"/>
    </location>
    <ligand>
        <name>carbamoyl phosphate</name>
        <dbReference type="ChEBI" id="CHEBI:58228"/>
    </ligand>
</feature>
<feature type="binding site" evidence="2">
    <location>
        <begin position="134"/>
        <end position="137"/>
    </location>
    <ligand>
        <name>carbamoyl phosphate</name>
        <dbReference type="ChEBI" id="CHEBI:58228"/>
    </ligand>
</feature>
<feature type="binding site" evidence="2">
    <location>
        <position position="166"/>
    </location>
    <ligand>
        <name>L-ornithine</name>
        <dbReference type="ChEBI" id="CHEBI:46911"/>
    </ligand>
</feature>
<feature type="binding site" evidence="2">
    <location>
        <position position="230"/>
    </location>
    <ligand>
        <name>L-ornithine</name>
        <dbReference type="ChEBI" id="CHEBI:46911"/>
    </ligand>
</feature>
<feature type="binding site" evidence="2">
    <location>
        <begin position="234"/>
        <end position="235"/>
    </location>
    <ligand>
        <name>L-ornithine</name>
        <dbReference type="ChEBI" id="CHEBI:46911"/>
    </ligand>
</feature>
<feature type="binding site" evidence="2">
    <location>
        <begin position="269"/>
        <end position="270"/>
    </location>
    <ligand>
        <name>carbamoyl phosphate</name>
        <dbReference type="ChEBI" id="CHEBI:58228"/>
    </ligand>
</feature>
<feature type="binding site" evidence="2">
    <location>
        <position position="314"/>
    </location>
    <ligand>
        <name>carbamoyl phosphate</name>
        <dbReference type="ChEBI" id="CHEBI:58228"/>
    </ligand>
</feature>
<proteinExistence type="inferred from homology"/>
<name>OTCC_BORBU</name>
<sequence>MYNLRNRSFLNLLDFTSKDIKYLLDLSINLKKSKYAGIEVQKLKGKNIVIIFEKDSTRTRCAFEIAAYDQGANITYLGSKGNQMGSKESMIDTARVLGRMYDAIGFRGFSQQTVECLANYSNVPVYNGLTDISHPTQILADLMTIKEHKGSLKGIKIVFCGDGRGNVANSLLKGCAIMGLDFRIFAPKELFPDPDLTLKARSLALESGGKITITDSKEEAVKCADVVYTDVWVSMGESNWEDRINLLKAYQVNKEIMCMAKDDAIFMHCLPAFHDLNTVIGKDIFDKYGLDGIEVTEEIFESKNSVVFDVAENRVHTIKAIMVSTLG</sequence>
<accession>O51782</accession>
<evidence type="ECO:0000250" key="1"/>
<evidence type="ECO:0000255" key="2">
    <source>
        <dbReference type="HAMAP-Rule" id="MF_01109"/>
    </source>
</evidence>
<comment type="function">
    <text evidence="1">Reversibly catalyzes the transfer of the carbamoyl group from carbamoyl phosphate (CP) to the N(epsilon) atom of ornithine (ORN) to produce L-citrulline.</text>
</comment>
<comment type="catalytic activity">
    <reaction evidence="2">
        <text>carbamoyl phosphate + L-ornithine = L-citrulline + phosphate + H(+)</text>
        <dbReference type="Rhea" id="RHEA:19513"/>
        <dbReference type="ChEBI" id="CHEBI:15378"/>
        <dbReference type="ChEBI" id="CHEBI:43474"/>
        <dbReference type="ChEBI" id="CHEBI:46911"/>
        <dbReference type="ChEBI" id="CHEBI:57743"/>
        <dbReference type="ChEBI" id="CHEBI:58228"/>
        <dbReference type="EC" id="2.1.3.3"/>
    </reaction>
</comment>
<comment type="pathway">
    <text evidence="2">Amino-acid degradation; L-arginine degradation via ADI pathway; carbamoyl phosphate from L-arginine: step 2/2.</text>
</comment>
<comment type="subcellular location">
    <subcellularLocation>
        <location evidence="2">Cytoplasm</location>
    </subcellularLocation>
</comment>
<comment type="similarity">
    <text evidence="2">Belongs to the aspartate/ornithine carbamoyltransferase superfamily. OTCase family.</text>
</comment>